<feature type="signal peptide" evidence="2">
    <location>
        <begin position="1"/>
        <end position="19"/>
    </location>
</feature>
<feature type="chain" id="PRO_0000407779" description="Maintenance of telomere capping protein 6">
    <location>
        <begin position="20"/>
        <end position="503"/>
    </location>
</feature>
<feature type="topological domain" description="Extracellular" evidence="2">
    <location>
        <begin position="20"/>
        <end position="450"/>
    </location>
</feature>
<feature type="transmembrane region" description="Helical" evidence="2">
    <location>
        <begin position="451"/>
        <end position="471"/>
    </location>
</feature>
<feature type="topological domain" description="Cytoplasmic" evidence="2">
    <location>
        <begin position="472"/>
        <end position="503"/>
    </location>
</feature>
<feature type="glycosylation site" description="N-linked (GlcNAc...) asparagine" evidence="2">
    <location>
        <position position="43"/>
    </location>
</feature>
<feature type="glycosylation site" description="N-linked (GlcNAc...) asparagine" evidence="2">
    <location>
        <position position="66"/>
    </location>
</feature>
<feature type="glycosylation site" description="N-linked (GlcNAc...) asparagine" evidence="2">
    <location>
        <position position="96"/>
    </location>
</feature>
<feature type="glycosylation site" description="N-linked (GlcNAc...) asparagine" evidence="2">
    <location>
        <position position="140"/>
    </location>
</feature>
<feature type="glycosylation site" description="N-linked (GlcNAc...) asparagine" evidence="2">
    <location>
        <position position="152"/>
    </location>
</feature>
<feature type="glycosylation site" description="N-linked (GlcNAc...) asparagine" evidence="2">
    <location>
        <position position="227"/>
    </location>
</feature>
<feature type="glycosylation site" description="N-linked (GlcNAc...) asparagine" evidence="2">
    <location>
        <position position="252"/>
    </location>
</feature>
<feature type="glycosylation site" description="N-linked (GlcNAc...) asparagine" evidence="2">
    <location>
        <position position="312"/>
    </location>
</feature>
<feature type="glycosylation site" description="N-linked (GlcNAc...) asparagine" evidence="2">
    <location>
        <position position="320"/>
    </location>
</feature>
<feature type="glycosylation site" description="N-linked (GlcNAc...) asparagine" evidence="2">
    <location>
        <position position="338"/>
    </location>
</feature>
<feature type="glycosylation site" description="N-linked (GlcNAc...) asparagine" evidence="2">
    <location>
        <position position="389"/>
    </location>
</feature>
<accession>C5DDK8</accession>
<reference key="1">
    <citation type="journal article" date="2009" name="Genome Res.">
        <title>Comparative genomics of protoploid Saccharomycetaceae.</title>
        <authorList>
            <consortium name="The Genolevures Consortium"/>
            <person name="Souciet J.-L."/>
            <person name="Dujon B."/>
            <person name="Gaillardin C."/>
            <person name="Johnston M."/>
            <person name="Baret P.V."/>
            <person name="Cliften P."/>
            <person name="Sherman D.J."/>
            <person name="Weissenbach J."/>
            <person name="Westhof E."/>
            <person name="Wincker P."/>
            <person name="Jubin C."/>
            <person name="Poulain J."/>
            <person name="Barbe V."/>
            <person name="Segurens B."/>
            <person name="Artiguenave F."/>
            <person name="Anthouard V."/>
            <person name="Vacherie B."/>
            <person name="Val M.-E."/>
            <person name="Fulton R.S."/>
            <person name="Minx P."/>
            <person name="Wilson R."/>
            <person name="Durrens P."/>
            <person name="Jean G."/>
            <person name="Marck C."/>
            <person name="Martin T."/>
            <person name="Nikolski M."/>
            <person name="Rolland T."/>
            <person name="Seret M.-L."/>
            <person name="Casaregola S."/>
            <person name="Despons L."/>
            <person name="Fairhead C."/>
            <person name="Fischer G."/>
            <person name="Lafontaine I."/>
            <person name="Leh V."/>
            <person name="Lemaire M."/>
            <person name="de Montigny J."/>
            <person name="Neuveglise C."/>
            <person name="Thierry A."/>
            <person name="Blanc-Lenfle I."/>
            <person name="Bleykasten C."/>
            <person name="Diffels J."/>
            <person name="Fritsch E."/>
            <person name="Frangeul L."/>
            <person name="Goeffon A."/>
            <person name="Jauniaux N."/>
            <person name="Kachouri-Lafond R."/>
            <person name="Payen C."/>
            <person name="Potier S."/>
            <person name="Pribylova L."/>
            <person name="Ozanne C."/>
            <person name="Richard G.-F."/>
            <person name="Sacerdot C."/>
            <person name="Straub M.-L."/>
            <person name="Talla E."/>
        </authorList>
    </citation>
    <scope>NUCLEOTIDE SEQUENCE [LARGE SCALE GENOMIC DNA]</scope>
    <source>
        <strain>ATCC 56472 / CBS 6340 / NRRL Y-8284</strain>
    </source>
</reference>
<comment type="function">
    <text evidence="1">May be involved in telomere capping.</text>
</comment>
<comment type="subcellular location">
    <subcellularLocation>
        <location evidence="3">Membrane</location>
        <topology evidence="3">Single-pass type I membrane protein</topology>
    </subcellularLocation>
</comment>
<comment type="similarity">
    <text evidence="3">Belongs to the MTC6 family.</text>
</comment>
<keyword id="KW-0325">Glycoprotein</keyword>
<keyword id="KW-0472">Membrane</keyword>
<keyword id="KW-1185">Reference proteome</keyword>
<keyword id="KW-0732">Signal</keyword>
<keyword id="KW-0812">Transmembrane</keyword>
<keyword id="KW-1133">Transmembrane helix</keyword>
<name>MTC6_LACTC</name>
<proteinExistence type="inferred from homology"/>
<organism>
    <name type="scientific">Lachancea thermotolerans (strain ATCC 56472 / CBS 6340 / NRRL Y-8284)</name>
    <name type="common">Yeast</name>
    <name type="synonym">Kluyveromyces thermotolerans</name>
    <dbReference type="NCBI Taxonomy" id="559295"/>
    <lineage>
        <taxon>Eukaryota</taxon>
        <taxon>Fungi</taxon>
        <taxon>Dikarya</taxon>
        <taxon>Ascomycota</taxon>
        <taxon>Saccharomycotina</taxon>
        <taxon>Saccharomycetes</taxon>
        <taxon>Saccharomycetales</taxon>
        <taxon>Saccharomycetaceae</taxon>
        <taxon>Lachancea</taxon>
    </lineage>
</organism>
<dbReference type="EMBL" id="CU928167">
    <property type="protein sequence ID" value="CAR21869.1"/>
    <property type="molecule type" value="Genomic_DNA"/>
</dbReference>
<dbReference type="RefSeq" id="XP_002552307.1">
    <property type="nucleotide sequence ID" value="XM_002552261.1"/>
</dbReference>
<dbReference type="FunCoup" id="C5DDK8">
    <property type="interactions" value="25"/>
</dbReference>
<dbReference type="STRING" id="559295.C5DDK8"/>
<dbReference type="GlyCosmos" id="C5DDK8">
    <property type="glycosylation" value="11 sites, No reported glycans"/>
</dbReference>
<dbReference type="GeneID" id="8291166"/>
<dbReference type="KEGG" id="lth:KLTH0C01804g"/>
<dbReference type="eggNOG" id="ENOG502QVFP">
    <property type="taxonomic scope" value="Eukaryota"/>
</dbReference>
<dbReference type="HOGENOM" id="CLU_033723_0_0_1"/>
<dbReference type="InParanoid" id="C5DDK8"/>
<dbReference type="OMA" id="WGTIDPQ"/>
<dbReference type="OrthoDB" id="5573651at2759"/>
<dbReference type="Proteomes" id="UP000002036">
    <property type="component" value="Chromosome C"/>
</dbReference>
<dbReference type="GO" id="GO:0016020">
    <property type="term" value="C:membrane"/>
    <property type="evidence" value="ECO:0007669"/>
    <property type="project" value="UniProtKB-SubCell"/>
</dbReference>
<dbReference type="InterPro" id="IPR016187">
    <property type="entry name" value="CTDL_fold"/>
</dbReference>
<dbReference type="InterPro" id="IPR051008">
    <property type="entry name" value="Telomere_Capping_Maintenance"/>
</dbReference>
<dbReference type="PANTHER" id="PTHR35518:SF2">
    <property type="entry name" value="MAINTENANCE OF TELOMERE CAPPING PROTEIN 6"/>
    <property type="match status" value="1"/>
</dbReference>
<dbReference type="PANTHER" id="PTHR35518">
    <property type="entry name" value="MAINTENANCE OF TELOMOERE CAPPING"/>
    <property type="match status" value="1"/>
</dbReference>
<dbReference type="Pfam" id="PF25506">
    <property type="entry name" value="TIM-barrel_MTC6"/>
    <property type="match status" value="1"/>
</dbReference>
<dbReference type="SUPFAM" id="SSF56436">
    <property type="entry name" value="C-type lectin-like"/>
    <property type="match status" value="1"/>
</dbReference>
<evidence type="ECO:0000250" key="1"/>
<evidence type="ECO:0000255" key="2"/>
<evidence type="ECO:0000305" key="3"/>
<protein>
    <recommendedName>
        <fullName>Maintenance of telomere capping protein 6</fullName>
    </recommendedName>
</protein>
<sequence length="503" mass="56101">MNRVVYGLLLTLVLNVVRGQSFWPALSSDSLIALRSQRDVLSNISIDKVPMVGVQLNEVAFRGTSNETESLEILASLLNVGVQAYMMDIEFDESYNLTISGSDTSLGTTLSTFKRFISSSNNYLNADMLVLLLRLKQNTNTSTKGAPSNFPNITAILDLYLGSSTLYTPSQLAYDRSSGNVAPSYGNLNSPDWPSLNYFLYSIQKRAVVFYVDTASSDALQSPAIFNASNLNYETSNTPIVCPLTNNAQVLNTSSLSWRFLQKDYSPSDIREYTMCGYSPIIDNKYNPNSINTISNVLENSLLWSWASNEPNTSDDTRSNSTSLVARRCAVVHYTKSNSSSYWTVANCYDRKRALCKRDGNDFEWAVTQEGASYFSHHDQDGNGFCPDNFSLSLPQTALQEKSLDNYLSQLSPEGWEIWIDLNSVSVPDCWVPDGPYASCPYQKEVSTRNFVSMITPVSVFAAVTILMLIMLSWRRVPIQDNRKRWKRVINSHLGSKAEGVPA</sequence>
<gene>
    <name type="primary">MTC6</name>
    <name type="ordered locus">KLTH0C01804g</name>
</gene>